<evidence type="ECO:0000255" key="1">
    <source>
        <dbReference type="HAMAP-Rule" id="MF_00104"/>
    </source>
</evidence>
<comment type="function">
    <text evidence="1">Digests double-stranded RNA. Involved in the processing of primary rRNA transcript to yield the immediate precursors to the large and small rRNAs (23S and 16S). Processes some mRNAs, and tRNAs when they are encoded in the rRNA operon. Processes pre-crRNA and tracrRNA of type II CRISPR loci if present in the organism.</text>
</comment>
<comment type="catalytic activity">
    <reaction evidence="1">
        <text>Endonucleolytic cleavage to 5'-phosphomonoester.</text>
        <dbReference type="EC" id="3.1.26.3"/>
    </reaction>
</comment>
<comment type="cofactor">
    <cofactor evidence="1">
        <name>Mg(2+)</name>
        <dbReference type="ChEBI" id="CHEBI:18420"/>
    </cofactor>
</comment>
<comment type="subunit">
    <text evidence="1">Homodimer.</text>
</comment>
<comment type="subcellular location">
    <subcellularLocation>
        <location evidence="1">Cytoplasm</location>
    </subcellularLocation>
</comment>
<comment type="similarity">
    <text evidence="1">Belongs to the ribonuclease III family.</text>
</comment>
<reference key="1">
    <citation type="journal article" date="1995" name="DNA Res.">
        <title>Sequence analysis of the genome of the unicellular cyanobacterium Synechocystis sp. strain PCC6803. I. Sequence features in the 1 Mb region from map positions 64% to 92% of the genome.</title>
        <authorList>
            <person name="Kaneko T."/>
            <person name="Tanaka A."/>
            <person name="Sato S."/>
            <person name="Kotani H."/>
            <person name="Sazuka T."/>
            <person name="Miyajima N."/>
            <person name="Sugiura M."/>
            <person name="Tabata S."/>
        </authorList>
    </citation>
    <scope>NUCLEOTIDE SEQUENCE [LARGE SCALE GENOMIC DNA]</scope>
    <source>
        <strain>ATCC 27184 / PCC 6803 / N-1</strain>
    </source>
</reference>
<reference key="2">
    <citation type="journal article" date="1996" name="DNA Res.">
        <title>Sequence analysis of the genome of the unicellular cyanobacterium Synechocystis sp. strain PCC6803. II. Sequence determination of the entire genome and assignment of potential protein-coding regions.</title>
        <authorList>
            <person name="Kaneko T."/>
            <person name="Sato S."/>
            <person name="Kotani H."/>
            <person name="Tanaka A."/>
            <person name="Asamizu E."/>
            <person name="Nakamura Y."/>
            <person name="Miyajima N."/>
            <person name="Hirosawa M."/>
            <person name="Sugiura M."/>
            <person name="Sasamoto S."/>
            <person name="Kimura T."/>
            <person name="Hosouchi T."/>
            <person name="Matsuno A."/>
            <person name="Muraki A."/>
            <person name="Nakazaki N."/>
            <person name="Naruo K."/>
            <person name="Okumura S."/>
            <person name="Shimpo S."/>
            <person name="Takeuchi C."/>
            <person name="Wada T."/>
            <person name="Watanabe A."/>
            <person name="Yamada M."/>
            <person name="Yasuda M."/>
            <person name="Tabata S."/>
        </authorList>
    </citation>
    <scope>NUCLEOTIDE SEQUENCE [LARGE SCALE GENOMIC DNA]</scope>
    <source>
        <strain>ATCC 27184 / PCC 6803 / Kazusa</strain>
    </source>
</reference>
<gene>
    <name evidence="1" type="primary">rnc2</name>
    <name type="ordered locus">slr0346</name>
</gene>
<organism>
    <name type="scientific">Synechocystis sp. (strain ATCC 27184 / PCC 6803 / Kazusa)</name>
    <dbReference type="NCBI Taxonomy" id="1111708"/>
    <lineage>
        <taxon>Bacteria</taxon>
        <taxon>Bacillati</taxon>
        <taxon>Cyanobacteriota</taxon>
        <taxon>Cyanophyceae</taxon>
        <taxon>Synechococcales</taxon>
        <taxon>Merismopediaceae</taxon>
        <taxon>Synechocystis</taxon>
    </lineage>
</organism>
<proteinExistence type="inferred from homology"/>
<sequence>MSLLPHRQTQLKALLRRLGLTDNTPVDWNLVDLALTHASQSPEQNYQQLEFVGDAVVRLASAEVLMKHYPQTSVGEMSALRAILVSDRTLAGWGELYGLDRFLWITPAVLADKNGRVSLMADSFEALLGALYLSVGDLSLIRPWLSEHLLAKATEIRQDPALHNYKEALQAWTQAHYKCLPEYRVEPLDQNLPQQSGFQATVWLGDQPLGSGSGSSKKSAEQAAAQQAYQDFIAKEILPMPKIN</sequence>
<accession>Q55637</accession>
<name>RNC2_SYNY3</name>
<protein>
    <recommendedName>
        <fullName evidence="1">Ribonuclease 3 2</fullName>
        <ecNumber evidence="1">3.1.26.3</ecNumber>
    </recommendedName>
    <alternativeName>
        <fullName evidence="1">Ribonuclease III 2</fullName>
        <shortName evidence="1">RNase III 2</shortName>
    </alternativeName>
</protein>
<dbReference type="EC" id="3.1.26.3" evidence="1"/>
<dbReference type="EMBL" id="BA000022">
    <property type="protein sequence ID" value="BAA10153.1"/>
    <property type="molecule type" value="Genomic_DNA"/>
</dbReference>
<dbReference type="PIR" id="S76301">
    <property type="entry name" value="S76301"/>
</dbReference>
<dbReference type="SMR" id="Q55637"/>
<dbReference type="IntAct" id="Q55637">
    <property type="interactions" value="1"/>
</dbReference>
<dbReference type="STRING" id="1148.gene:10499646"/>
<dbReference type="PaxDb" id="1148-1001526"/>
<dbReference type="EnsemblBacteria" id="BAA10153">
    <property type="protein sequence ID" value="BAA10153"/>
    <property type="gene ID" value="BAA10153"/>
</dbReference>
<dbReference type="KEGG" id="syn:slr0346"/>
<dbReference type="eggNOG" id="COG0571">
    <property type="taxonomic scope" value="Bacteria"/>
</dbReference>
<dbReference type="InParanoid" id="Q55637"/>
<dbReference type="PhylomeDB" id="Q55637"/>
<dbReference type="Proteomes" id="UP000001425">
    <property type="component" value="Chromosome"/>
</dbReference>
<dbReference type="GO" id="GO:0005829">
    <property type="term" value="C:cytosol"/>
    <property type="evidence" value="ECO:0000318"/>
    <property type="project" value="GO_Central"/>
</dbReference>
<dbReference type="GO" id="GO:0003725">
    <property type="term" value="F:double-stranded RNA binding"/>
    <property type="evidence" value="ECO:0000318"/>
    <property type="project" value="GO_Central"/>
</dbReference>
<dbReference type="GO" id="GO:0046872">
    <property type="term" value="F:metal ion binding"/>
    <property type="evidence" value="ECO:0007669"/>
    <property type="project" value="UniProtKB-KW"/>
</dbReference>
<dbReference type="GO" id="GO:0004525">
    <property type="term" value="F:ribonuclease III activity"/>
    <property type="evidence" value="ECO:0000318"/>
    <property type="project" value="GO_Central"/>
</dbReference>
<dbReference type="GO" id="GO:0019843">
    <property type="term" value="F:rRNA binding"/>
    <property type="evidence" value="ECO:0007669"/>
    <property type="project" value="UniProtKB-KW"/>
</dbReference>
<dbReference type="GO" id="GO:0006397">
    <property type="term" value="P:mRNA processing"/>
    <property type="evidence" value="ECO:0007669"/>
    <property type="project" value="UniProtKB-UniRule"/>
</dbReference>
<dbReference type="GO" id="GO:0010468">
    <property type="term" value="P:regulation of gene expression"/>
    <property type="evidence" value="ECO:0000318"/>
    <property type="project" value="GO_Central"/>
</dbReference>
<dbReference type="GO" id="GO:0006396">
    <property type="term" value="P:RNA processing"/>
    <property type="evidence" value="ECO:0000318"/>
    <property type="project" value="GO_Central"/>
</dbReference>
<dbReference type="GO" id="GO:0006364">
    <property type="term" value="P:rRNA processing"/>
    <property type="evidence" value="ECO:0007669"/>
    <property type="project" value="UniProtKB-UniRule"/>
</dbReference>
<dbReference type="GO" id="GO:0008033">
    <property type="term" value="P:tRNA processing"/>
    <property type="evidence" value="ECO:0007669"/>
    <property type="project" value="UniProtKB-KW"/>
</dbReference>
<dbReference type="CDD" id="cd00593">
    <property type="entry name" value="RIBOc"/>
    <property type="match status" value="1"/>
</dbReference>
<dbReference type="FunFam" id="3.30.160.20:FF:000161">
    <property type="entry name" value="Ribonuclease 3"/>
    <property type="match status" value="1"/>
</dbReference>
<dbReference type="Gene3D" id="3.30.160.20">
    <property type="match status" value="1"/>
</dbReference>
<dbReference type="Gene3D" id="1.10.1520.10">
    <property type="entry name" value="Ribonuclease III domain"/>
    <property type="match status" value="1"/>
</dbReference>
<dbReference type="HAMAP" id="MF_00104">
    <property type="entry name" value="RNase_III"/>
    <property type="match status" value="1"/>
</dbReference>
<dbReference type="InterPro" id="IPR014720">
    <property type="entry name" value="dsRBD_dom"/>
</dbReference>
<dbReference type="InterPro" id="IPR011907">
    <property type="entry name" value="RNase_III"/>
</dbReference>
<dbReference type="InterPro" id="IPR000999">
    <property type="entry name" value="RNase_III_dom"/>
</dbReference>
<dbReference type="InterPro" id="IPR036389">
    <property type="entry name" value="RNase_III_sf"/>
</dbReference>
<dbReference type="NCBIfam" id="TIGR02191">
    <property type="entry name" value="RNaseIII"/>
    <property type="match status" value="1"/>
</dbReference>
<dbReference type="PANTHER" id="PTHR11207:SF0">
    <property type="entry name" value="RIBONUCLEASE 3"/>
    <property type="match status" value="1"/>
</dbReference>
<dbReference type="PANTHER" id="PTHR11207">
    <property type="entry name" value="RIBONUCLEASE III"/>
    <property type="match status" value="1"/>
</dbReference>
<dbReference type="Pfam" id="PF00035">
    <property type="entry name" value="dsrm"/>
    <property type="match status" value="1"/>
</dbReference>
<dbReference type="Pfam" id="PF00636">
    <property type="entry name" value="Ribonuclease_3"/>
    <property type="match status" value="1"/>
</dbReference>
<dbReference type="SMART" id="SM00358">
    <property type="entry name" value="DSRM"/>
    <property type="match status" value="1"/>
</dbReference>
<dbReference type="SMART" id="SM00535">
    <property type="entry name" value="RIBOc"/>
    <property type="match status" value="1"/>
</dbReference>
<dbReference type="SUPFAM" id="SSF54768">
    <property type="entry name" value="dsRNA-binding domain-like"/>
    <property type="match status" value="1"/>
</dbReference>
<dbReference type="SUPFAM" id="SSF69065">
    <property type="entry name" value="RNase III domain-like"/>
    <property type="match status" value="1"/>
</dbReference>
<dbReference type="PROSITE" id="PS50137">
    <property type="entry name" value="DS_RBD"/>
    <property type="match status" value="1"/>
</dbReference>
<dbReference type="PROSITE" id="PS00517">
    <property type="entry name" value="RNASE_3_1"/>
    <property type="match status" value="1"/>
</dbReference>
<dbReference type="PROSITE" id="PS50142">
    <property type="entry name" value="RNASE_3_2"/>
    <property type="match status" value="1"/>
</dbReference>
<feature type="chain" id="PRO_0000180464" description="Ribonuclease 3 2">
    <location>
        <begin position="1"/>
        <end position="244"/>
    </location>
</feature>
<feature type="domain" description="RNase III" evidence="1">
    <location>
        <begin position="11"/>
        <end position="136"/>
    </location>
</feature>
<feature type="domain" description="DRBM" evidence="1">
    <location>
        <begin position="164"/>
        <end position="234"/>
    </location>
</feature>
<feature type="active site" evidence="1">
    <location>
        <position position="54"/>
    </location>
</feature>
<feature type="active site" evidence="1">
    <location>
        <position position="125"/>
    </location>
</feature>
<feature type="binding site" evidence="1">
    <location>
        <position position="50"/>
    </location>
    <ligand>
        <name>Mg(2+)</name>
        <dbReference type="ChEBI" id="CHEBI:18420"/>
    </ligand>
</feature>
<feature type="binding site" evidence="1">
    <location>
        <position position="122"/>
    </location>
    <ligand>
        <name>Mg(2+)</name>
        <dbReference type="ChEBI" id="CHEBI:18420"/>
    </ligand>
</feature>
<feature type="binding site" evidence="1">
    <location>
        <position position="125"/>
    </location>
    <ligand>
        <name>Mg(2+)</name>
        <dbReference type="ChEBI" id="CHEBI:18420"/>
    </ligand>
</feature>
<keyword id="KW-0963">Cytoplasm</keyword>
<keyword id="KW-0255">Endonuclease</keyword>
<keyword id="KW-0378">Hydrolase</keyword>
<keyword id="KW-0460">Magnesium</keyword>
<keyword id="KW-0479">Metal-binding</keyword>
<keyword id="KW-0507">mRNA processing</keyword>
<keyword id="KW-0540">Nuclease</keyword>
<keyword id="KW-1185">Reference proteome</keyword>
<keyword id="KW-0694">RNA-binding</keyword>
<keyword id="KW-0698">rRNA processing</keyword>
<keyword id="KW-0699">rRNA-binding</keyword>
<keyword id="KW-0819">tRNA processing</keyword>